<proteinExistence type="inferred from homology"/>
<protein>
    <recommendedName>
        <fullName>Polyribonucleotide 5'-hydroxyl-kinase MJ1315</fullName>
        <ecNumber>2.7.1.78</ecNumber>
    </recommendedName>
    <alternativeName>
        <fullName>Polynucleotide kinase MJ1315</fullName>
    </alternativeName>
</protein>
<reference key="1">
    <citation type="journal article" date="1996" name="Science">
        <title>Complete genome sequence of the methanogenic archaeon, Methanococcus jannaschii.</title>
        <authorList>
            <person name="Bult C.J."/>
            <person name="White O."/>
            <person name="Olsen G.J."/>
            <person name="Zhou L."/>
            <person name="Fleischmann R.D."/>
            <person name="Sutton G.G."/>
            <person name="Blake J.A."/>
            <person name="FitzGerald L.M."/>
            <person name="Clayton R.A."/>
            <person name="Gocayne J.D."/>
            <person name="Kerlavage A.R."/>
            <person name="Dougherty B.A."/>
            <person name="Tomb J.-F."/>
            <person name="Adams M.D."/>
            <person name="Reich C.I."/>
            <person name="Overbeek R."/>
            <person name="Kirkness E.F."/>
            <person name="Weinstock K.G."/>
            <person name="Merrick J.M."/>
            <person name="Glodek A."/>
            <person name="Scott J.L."/>
            <person name="Geoghagen N.S.M."/>
            <person name="Weidman J.F."/>
            <person name="Fuhrmann J.L."/>
            <person name="Nguyen D."/>
            <person name="Utterback T.R."/>
            <person name="Kelley J.M."/>
            <person name="Peterson J.D."/>
            <person name="Sadow P.W."/>
            <person name="Hanna M.C."/>
            <person name="Cotton M.D."/>
            <person name="Roberts K.M."/>
            <person name="Hurst M.A."/>
            <person name="Kaine B.P."/>
            <person name="Borodovsky M."/>
            <person name="Klenk H.-P."/>
            <person name="Fraser C.M."/>
            <person name="Smith H.O."/>
            <person name="Woese C.R."/>
            <person name="Venter J.C."/>
        </authorList>
    </citation>
    <scope>NUCLEOTIDE SEQUENCE [LARGE SCALE GENOMIC DNA]</scope>
    <source>
        <strain>ATCC 43067 / DSM 2661 / JAL-1 / JCM 10045 / NBRC 100440</strain>
    </source>
</reference>
<keyword id="KW-0067">ATP-binding</keyword>
<keyword id="KW-0418">Kinase</keyword>
<keyword id="KW-0547">Nucleotide-binding</keyword>
<keyword id="KW-1185">Reference proteome</keyword>
<keyword id="KW-0808">Transferase</keyword>
<accession>Q58711</accession>
<gene>
    <name type="ordered locus">MJ1315</name>
</gene>
<comment type="function">
    <text evidence="1">Polynucleotide kinase that can phosphorylate the 5'-hydroxyl groups of both single-stranded RNA (ssRNA) and single-stranded DNA (ssDNA). Exhibits a strong preference for ssRNA (By similarity).</text>
</comment>
<comment type="catalytic activity">
    <reaction>
        <text>a 5'-end dephospho-2'-deoxyribonucleoside-DNA + ATP = a 5'-end 5'-phospho-2'-deoxyribonucleoside-DNA + ADP + H(+)</text>
        <dbReference type="Rhea" id="RHEA:15669"/>
        <dbReference type="Rhea" id="RHEA-COMP:13180"/>
        <dbReference type="Rhea" id="RHEA-COMP:13184"/>
        <dbReference type="ChEBI" id="CHEBI:15378"/>
        <dbReference type="ChEBI" id="CHEBI:30616"/>
        <dbReference type="ChEBI" id="CHEBI:136412"/>
        <dbReference type="ChEBI" id="CHEBI:136416"/>
        <dbReference type="ChEBI" id="CHEBI:456216"/>
        <dbReference type="EC" id="2.7.1.78"/>
    </reaction>
</comment>
<comment type="catalytic activity">
    <reaction>
        <text>a 5'-end dephospho-ribonucleoside-RNA + ATP = a 5'-end 5'-phospho-ribonucleoside-RNA + ADP + H(+)</text>
        <dbReference type="Rhea" id="RHEA:54580"/>
        <dbReference type="Rhea" id="RHEA-COMP:13936"/>
        <dbReference type="Rhea" id="RHEA-COMP:15179"/>
        <dbReference type="ChEBI" id="CHEBI:15378"/>
        <dbReference type="ChEBI" id="CHEBI:30616"/>
        <dbReference type="ChEBI" id="CHEBI:138282"/>
        <dbReference type="ChEBI" id="CHEBI:138284"/>
        <dbReference type="ChEBI" id="CHEBI:456216"/>
        <dbReference type="EC" id="2.7.1.78"/>
    </reaction>
</comment>
<comment type="cofactor">
    <cofactor evidence="1">
        <name>a divalent metal cation</name>
        <dbReference type="ChEBI" id="CHEBI:60240"/>
    </cofactor>
</comment>
<name>PRNK_METJA</name>
<feature type="chain" id="PRO_0000107272" description="Polyribonucleotide 5'-hydroxyl-kinase MJ1315">
    <location>
        <begin position="1"/>
        <end position="361"/>
    </location>
</feature>
<feature type="binding site" evidence="2">
    <location>
        <begin position="39"/>
        <end position="46"/>
    </location>
    <ligand>
        <name>ATP</name>
        <dbReference type="ChEBI" id="CHEBI:30616"/>
    </ligand>
</feature>
<dbReference type="EC" id="2.7.1.78"/>
<dbReference type="EMBL" id="L77117">
    <property type="protein sequence ID" value="AAB99322.1"/>
    <property type="molecule type" value="Genomic_DNA"/>
</dbReference>
<dbReference type="PIR" id="B64464">
    <property type="entry name" value="B64464"/>
</dbReference>
<dbReference type="SMR" id="Q58711"/>
<dbReference type="FunCoup" id="Q58711">
    <property type="interactions" value="94"/>
</dbReference>
<dbReference type="STRING" id="243232.MJ_1315"/>
<dbReference type="PaxDb" id="243232-MJ_1315"/>
<dbReference type="DNASU" id="1452217"/>
<dbReference type="EnsemblBacteria" id="AAB99322">
    <property type="protein sequence ID" value="AAB99322"/>
    <property type="gene ID" value="MJ_1315"/>
</dbReference>
<dbReference type="KEGG" id="mja:MJ_1315"/>
<dbReference type="eggNOG" id="arCOG04127">
    <property type="taxonomic scope" value="Archaea"/>
</dbReference>
<dbReference type="HOGENOM" id="CLU_051301_0_1_2"/>
<dbReference type="InParanoid" id="Q58711"/>
<dbReference type="PhylomeDB" id="Q58711"/>
<dbReference type="Proteomes" id="UP000000805">
    <property type="component" value="Chromosome"/>
</dbReference>
<dbReference type="GO" id="GO:0005524">
    <property type="term" value="F:ATP binding"/>
    <property type="evidence" value="ECO:0007669"/>
    <property type="project" value="UniProtKB-KW"/>
</dbReference>
<dbReference type="GO" id="GO:0046404">
    <property type="term" value="F:ATP-dependent polydeoxyribonucleotide 5'-hydroxyl-kinase activity"/>
    <property type="evidence" value="ECO:0007669"/>
    <property type="project" value="RHEA"/>
</dbReference>
<dbReference type="GO" id="GO:0051736">
    <property type="term" value="F:ATP-dependent polyribonucleotide 5'-hydroxyl-kinase activity"/>
    <property type="evidence" value="ECO:0007669"/>
    <property type="project" value="RHEA"/>
</dbReference>
<dbReference type="GO" id="GO:0051731">
    <property type="term" value="F:polynucleotide 5'-hydroxyl-kinase activity"/>
    <property type="evidence" value="ECO:0000318"/>
    <property type="project" value="GO_Central"/>
</dbReference>
<dbReference type="GO" id="GO:0006396">
    <property type="term" value="P:RNA processing"/>
    <property type="evidence" value="ECO:0000318"/>
    <property type="project" value="GO_Central"/>
</dbReference>
<dbReference type="Gene3D" id="3.40.50.300">
    <property type="entry name" value="P-loop containing nucleotide triphosphate hydrolases"/>
    <property type="match status" value="1"/>
</dbReference>
<dbReference type="InterPro" id="IPR045116">
    <property type="entry name" value="Clp1/Grc3"/>
</dbReference>
<dbReference type="InterPro" id="IPR032319">
    <property type="entry name" value="CLP1_P"/>
</dbReference>
<dbReference type="InterPro" id="IPR027417">
    <property type="entry name" value="P-loop_NTPase"/>
</dbReference>
<dbReference type="PANTHER" id="PTHR12755">
    <property type="entry name" value="CLEAVAGE/POLYADENYLATION FACTOR IA SUBUNIT CLP1P"/>
    <property type="match status" value="1"/>
</dbReference>
<dbReference type="PANTHER" id="PTHR12755:SF3">
    <property type="entry name" value="POLYNUCLEOTIDE 5'-HYDROXYL-KINASE NOL9"/>
    <property type="match status" value="1"/>
</dbReference>
<dbReference type="Pfam" id="PF16575">
    <property type="entry name" value="CLP1_P"/>
    <property type="match status" value="1"/>
</dbReference>
<dbReference type="SUPFAM" id="SSF52540">
    <property type="entry name" value="P-loop containing nucleoside triphosphate hydrolases"/>
    <property type="match status" value="1"/>
</dbReference>
<evidence type="ECO:0000250" key="1"/>
<evidence type="ECO:0000255" key="2"/>
<organism>
    <name type="scientific">Methanocaldococcus jannaschii (strain ATCC 43067 / DSM 2661 / JAL-1 / JCM 10045 / NBRC 100440)</name>
    <name type="common">Methanococcus jannaschii</name>
    <dbReference type="NCBI Taxonomy" id="243232"/>
    <lineage>
        <taxon>Archaea</taxon>
        <taxon>Methanobacteriati</taxon>
        <taxon>Methanobacteriota</taxon>
        <taxon>Methanomada group</taxon>
        <taxon>Methanococci</taxon>
        <taxon>Methanococcales</taxon>
        <taxon>Methanocaldococcaceae</taxon>
        <taxon>Methanocaldococcus</taxon>
    </lineage>
</organism>
<sequence>MVDNMISKAYYTTEIPEDRFEALSCIKDSQKPLKIILLGGVDSGKTTLATFLANELLNLGFKVAIVDSDVGQKSILPPATISLAFPETNFNNLYEIKPYKSYFVGSTAPIQFFGEMITGTKLLCDYAEDKADIIIVDTTGLISGSGADLKRMKIEMIKPDIIIALEKRNELKSILKPFENKIRVFYLKVYENAKSFSREERKEIRAEKWKEYFKNSKIYNIGFNDVVIGGTKVFQGEKILEDEKYLLESLFKWKILYGSKCDGRYTIVKRDLVNMPRQIDKNILYYIEPERFNNLIVGLIDEDSFCIGLGILKTIDFENETLEILTPISEEDIKNIREIRFGRIRVDENGEELGLLDRDSI</sequence>